<dbReference type="EMBL" id="CP000857">
    <property type="protein sequence ID" value="ACN44891.1"/>
    <property type="molecule type" value="Genomic_DNA"/>
</dbReference>
<dbReference type="RefSeq" id="WP_000730078.1">
    <property type="nucleotide sequence ID" value="NC_012125.1"/>
</dbReference>
<dbReference type="SMR" id="C0PWC8"/>
<dbReference type="KEGG" id="sei:SPC_0716"/>
<dbReference type="HOGENOM" id="CLU_018614_3_0_6"/>
<dbReference type="Proteomes" id="UP000001599">
    <property type="component" value="Chromosome"/>
</dbReference>
<dbReference type="GO" id="GO:0005886">
    <property type="term" value="C:plasma membrane"/>
    <property type="evidence" value="ECO:0007669"/>
    <property type="project" value="UniProtKB-SubCell"/>
</dbReference>
<dbReference type="GO" id="GO:0008556">
    <property type="term" value="F:P-type potassium transmembrane transporter activity"/>
    <property type="evidence" value="ECO:0007669"/>
    <property type="project" value="InterPro"/>
</dbReference>
<dbReference type="GO" id="GO:0030955">
    <property type="term" value="F:potassium ion binding"/>
    <property type="evidence" value="ECO:0007669"/>
    <property type="project" value="UniProtKB-UniRule"/>
</dbReference>
<dbReference type="HAMAP" id="MF_00275">
    <property type="entry name" value="KdpA"/>
    <property type="match status" value="1"/>
</dbReference>
<dbReference type="InterPro" id="IPR004623">
    <property type="entry name" value="KdpA"/>
</dbReference>
<dbReference type="NCBIfam" id="TIGR00680">
    <property type="entry name" value="kdpA"/>
    <property type="match status" value="1"/>
</dbReference>
<dbReference type="PANTHER" id="PTHR30607">
    <property type="entry name" value="POTASSIUM-TRANSPORTING ATPASE A CHAIN"/>
    <property type="match status" value="1"/>
</dbReference>
<dbReference type="PANTHER" id="PTHR30607:SF2">
    <property type="entry name" value="POTASSIUM-TRANSPORTING ATPASE POTASSIUM-BINDING SUBUNIT"/>
    <property type="match status" value="1"/>
</dbReference>
<dbReference type="Pfam" id="PF03814">
    <property type="entry name" value="KdpA"/>
    <property type="match status" value="1"/>
</dbReference>
<dbReference type="PIRSF" id="PIRSF001294">
    <property type="entry name" value="K_ATPaseA"/>
    <property type="match status" value="1"/>
</dbReference>
<evidence type="ECO:0000255" key="1">
    <source>
        <dbReference type="HAMAP-Rule" id="MF_00275"/>
    </source>
</evidence>
<comment type="function">
    <text evidence="1">Part of the high-affinity ATP-driven potassium transport (or Kdp) system, which catalyzes the hydrolysis of ATP coupled with the electrogenic transport of potassium into the cytoplasm. This subunit binds the periplasmic potassium ions and delivers the ions to the membrane domain of KdpB through an intramembrane tunnel.</text>
</comment>
<comment type="subunit">
    <text evidence="1">The system is composed of three essential subunits: KdpA, KdpB and KdpC.</text>
</comment>
<comment type="subcellular location">
    <subcellularLocation>
        <location evidence="1">Cell inner membrane</location>
        <topology evidence="1">Multi-pass membrane protein</topology>
    </subcellularLocation>
</comment>
<comment type="similarity">
    <text evidence="1">Belongs to the KdpA family.</text>
</comment>
<sequence length="559" mass="59365">MAAQGFLLIASFLLILLVLAKPLGSGLARLIAAVPLPGVAGVERILWRTLGITDHEMNWRQYLLALLTLNLLGLGILFCLLFWQEWLPLNPQRLPGLSWDLALNTAVSFVTNTNWQAYSGESTLSYFSQMAGLTVQNFLSAATGIAVVFALIRAFTRQNVHTLGNAWQDLVRITLWILFPVALIIALFFIQQGVPQNLSAYQPITTLEGAKQLLPMGPVASQEAIKMLGTNGGGFFNANSSHPFENPTALTNLAQMLAIFLIPAALCFAFGEAAGDRRQGRALLWAMSFIFVVCVAVVMWAEVQGNPHLLAAGADSSVNMEGKETRFGVLASSLFAVVTTAASCGAVNAMHDSFTALGGMVPMWLMQIGEVVFGGVGSGLYGMLLFVLLAVFIAGLMIGRTPEYLGKKIDVREMKMTALAILVTPMLVLLGSALAMMTDAGRSAMLNPGPHGFSEVLYAVSSAANNNGSAFAGLSANSPFWNCLLAFCMFVGRFGVIIPVMAIAGSLVSKKVQPASQGTLATHGALFIGLLIGTVLLVGALTFIPALALGPVAEHFSLP</sequence>
<name>KDPA_SALPC</name>
<feature type="chain" id="PRO_1000190745" description="Potassium-transporting ATPase potassium-binding subunit">
    <location>
        <begin position="1"/>
        <end position="559"/>
    </location>
</feature>
<feature type="transmembrane region" description="Helical" evidence="1">
    <location>
        <begin position="5"/>
        <end position="25"/>
    </location>
</feature>
<feature type="transmembrane region" description="Helical" evidence="1">
    <location>
        <begin position="27"/>
        <end position="47"/>
    </location>
</feature>
<feature type="transmembrane region" description="Helical" evidence="1">
    <location>
        <begin position="63"/>
        <end position="83"/>
    </location>
</feature>
<feature type="transmembrane region" description="Helical" evidence="1">
    <location>
        <begin position="132"/>
        <end position="152"/>
    </location>
</feature>
<feature type="transmembrane region" description="Helical" evidence="1">
    <location>
        <begin position="170"/>
        <end position="190"/>
    </location>
</feature>
<feature type="transmembrane region" description="Helical" evidence="1">
    <location>
        <begin position="253"/>
        <end position="273"/>
    </location>
</feature>
<feature type="transmembrane region" description="Helical" evidence="1">
    <location>
        <begin position="283"/>
        <end position="303"/>
    </location>
</feature>
<feature type="transmembrane region" description="Helical" evidence="1">
    <location>
        <begin position="327"/>
        <end position="347"/>
    </location>
</feature>
<feature type="transmembrane region" description="Helical" evidence="1">
    <location>
        <begin position="356"/>
        <end position="376"/>
    </location>
</feature>
<feature type="transmembrane region" description="Helical" evidence="1">
    <location>
        <begin position="379"/>
        <end position="399"/>
    </location>
</feature>
<feature type="transmembrane region" description="Helical" evidence="1">
    <location>
        <begin position="416"/>
        <end position="436"/>
    </location>
</feature>
<feature type="transmembrane region" description="Helical" evidence="1">
    <location>
        <begin position="484"/>
        <end position="504"/>
    </location>
</feature>
<feature type="transmembrane region" description="Helical" evidence="1">
    <location>
        <begin position="524"/>
        <end position="544"/>
    </location>
</feature>
<reference key="1">
    <citation type="journal article" date="2009" name="PLoS ONE">
        <title>Salmonella paratyphi C: genetic divergence from Salmonella choleraesuis and pathogenic convergence with Salmonella typhi.</title>
        <authorList>
            <person name="Liu W.-Q."/>
            <person name="Feng Y."/>
            <person name="Wang Y."/>
            <person name="Zou Q.-H."/>
            <person name="Chen F."/>
            <person name="Guo J.-T."/>
            <person name="Peng Y.-H."/>
            <person name="Jin Y."/>
            <person name="Li Y.-G."/>
            <person name="Hu S.-N."/>
            <person name="Johnston R.N."/>
            <person name="Liu G.-R."/>
            <person name="Liu S.-L."/>
        </authorList>
    </citation>
    <scope>NUCLEOTIDE SEQUENCE [LARGE SCALE GENOMIC DNA]</scope>
    <source>
        <strain>RKS4594</strain>
    </source>
</reference>
<organism>
    <name type="scientific">Salmonella paratyphi C (strain RKS4594)</name>
    <dbReference type="NCBI Taxonomy" id="476213"/>
    <lineage>
        <taxon>Bacteria</taxon>
        <taxon>Pseudomonadati</taxon>
        <taxon>Pseudomonadota</taxon>
        <taxon>Gammaproteobacteria</taxon>
        <taxon>Enterobacterales</taxon>
        <taxon>Enterobacteriaceae</taxon>
        <taxon>Salmonella</taxon>
    </lineage>
</organism>
<gene>
    <name evidence="1" type="primary">kdpA</name>
    <name type="ordered locus">SPC_0716</name>
</gene>
<keyword id="KW-0997">Cell inner membrane</keyword>
<keyword id="KW-1003">Cell membrane</keyword>
<keyword id="KW-0406">Ion transport</keyword>
<keyword id="KW-0472">Membrane</keyword>
<keyword id="KW-0630">Potassium</keyword>
<keyword id="KW-0633">Potassium transport</keyword>
<keyword id="KW-0812">Transmembrane</keyword>
<keyword id="KW-1133">Transmembrane helix</keyword>
<keyword id="KW-0813">Transport</keyword>
<protein>
    <recommendedName>
        <fullName evidence="1">Potassium-transporting ATPase potassium-binding subunit</fullName>
    </recommendedName>
    <alternativeName>
        <fullName evidence="1">ATP phosphohydrolase [potassium-transporting] A chain</fullName>
    </alternativeName>
    <alternativeName>
        <fullName evidence="1">Potassium-binding and translocating subunit A</fullName>
    </alternativeName>
    <alternativeName>
        <fullName evidence="1">Potassium-translocating ATPase A chain</fullName>
    </alternativeName>
</protein>
<proteinExistence type="inferred from homology"/>
<accession>C0PWC8</accession>